<evidence type="ECO:0000250" key="1"/>
<evidence type="ECO:0000255" key="2"/>
<evidence type="ECO:0000305" key="3"/>
<accession>P55321</accession>
<accession>Q23738</accession>
<dbReference type="EMBL" id="U19764">
    <property type="protein sequence ID" value="AAA69029.1"/>
    <property type="molecule type" value="mRNA"/>
</dbReference>
<dbReference type="PIR" id="JC4143">
    <property type="entry name" value="JC4143"/>
</dbReference>
<dbReference type="SMR" id="P55321"/>
<dbReference type="GO" id="GO:0005576">
    <property type="term" value="C:extracellular region"/>
    <property type="evidence" value="ECO:0007669"/>
    <property type="project" value="UniProtKB-SubCell"/>
</dbReference>
<dbReference type="GO" id="GO:0005184">
    <property type="term" value="F:neuropeptide hormone activity"/>
    <property type="evidence" value="ECO:0007669"/>
    <property type="project" value="InterPro"/>
</dbReference>
<dbReference type="GO" id="GO:0007623">
    <property type="term" value="P:circadian rhythm"/>
    <property type="evidence" value="ECO:0007669"/>
    <property type="project" value="TreeGrafter"/>
</dbReference>
<dbReference type="GO" id="GO:0007218">
    <property type="term" value="P:neuropeptide signaling pathway"/>
    <property type="evidence" value="ECO:0007669"/>
    <property type="project" value="UniProtKB-KW"/>
</dbReference>
<dbReference type="Gene3D" id="1.10.2010.10">
    <property type="entry name" value="Crustacean CHH/MIH/GIH neurohormone"/>
    <property type="match status" value="1"/>
</dbReference>
<dbReference type="InterPro" id="IPR018251">
    <property type="entry name" value="Crust_neurhormone_CS"/>
</dbReference>
<dbReference type="InterPro" id="IPR031098">
    <property type="entry name" value="Crust_neurohorm"/>
</dbReference>
<dbReference type="InterPro" id="IPR035957">
    <property type="entry name" value="Crust_neurohorm_sf"/>
</dbReference>
<dbReference type="InterPro" id="IPR001166">
    <property type="entry name" value="Hyperglycemic"/>
</dbReference>
<dbReference type="InterPro" id="IPR001262">
    <property type="entry name" value="Hyperglycemic2"/>
</dbReference>
<dbReference type="PANTHER" id="PTHR35981">
    <property type="entry name" value="ION TRANSPORT PEPTIDE, ISOFORM C"/>
    <property type="match status" value="1"/>
</dbReference>
<dbReference type="PANTHER" id="PTHR35981:SF2">
    <property type="entry name" value="ION TRANSPORT PEPTIDE, ISOFORM C"/>
    <property type="match status" value="1"/>
</dbReference>
<dbReference type="Pfam" id="PF01147">
    <property type="entry name" value="Crust_neurohorm"/>
    <property type="match status" value="1"/>
</dbReference>
<dbReference type="PRINTS" id="PR00549">
    <property type="entry name" value="HYPRGLYCEMC2"/>
</dbReference>
<dbReference type="PRINTS" id="PR00550">
    <property type="entry name" value="HYPRGLYCEMIC"/>
</dbReference>
<dbReference type="SUPFAM" id="SSF81778">
    <property type="entry name" value="Crustacean CHH/MIH/GIH neurohormone"/>
    <property type="match status" value="1"/>
</dbReference>
<dbReference type="PROSITE" id="PS01250">
    <property type="entry name" value="CHH_MIH_GIH"/>
    <property type="match status" value="1"/>
</dbReference>
<sequence length="113" mass="12850">MMSLAHSKFSCQRTRLLAVVLLAALWSSSLQQAAARVINDDCPNLIGNRDLYKKVEWICDDCANIYRSTGMASLCRKDCFFNEDFLWCVRATERSEDLAQLKQWVTILGAGRI</sequence>
<name>MIH_CALSI</name>
<keyword id="KW-1015">Disulfide bond</keyword>
<keyword id="KW-0372">Hormone</keyword>
<keyword id="KW-0527">Neuropeptide</keyword>
<keyword id="KW-0964">Secreted</keyword>
<keyword id="KW-0732">Signal</keyword>
<proteinExistence type="inferred from homology"/>
<organism>
    <name type="scientific">Callinectes sapidus</name>
    <name type="common">Blue crab</name>
    <dbReference type="NCBI Taxonomy" id="6763"/>
    <lineage>
        <taxon>Eukaryota</taxon>
        <taxon>Metazoa</taxon>
        <taxon>Ecdysozoa</taxon>
        <taxon>Arthropoda</taxon>
        <taxon>Crustacea</taxon>
        <taxon>Multicrustacea</taxon>
        <taxon>Malacostraca</taxon>
        <taxon>Eumalacostraca</taxon>
        <taxon>Eucarida</taxon>
        <taxon>Decapoda</taxon>
        <taxon>Pleocyemata</taxon>
        <taxon>Brachyura</taxon>
        <taxon>Eubrachyura</taxon>
        <taxon>Portunoidea</taxon>
        <taxon>Portunidae</taxon>
        <taxon>Portuninae</taxon>
        <taxon>Callinectes</taxon>
    </lineage>
</organism>
<protein>
    <recommendedName>
        <fullName>Molt-inhibiting hormone</fullName>
        <shortName>MIH</shortName>
    </recommendedName>
</protein>
<comment type="function">
    <text evidence="1">Inhibits Y-organs where molting hormone (ecdysteroid) is secreted. A molting cycle is initiated when MIH secretion diminishes or stops (By similarity).</text>
</comment>
<comment type="subcellular location">
    <subcellularLocation>
        <location>Secreted</location>
    </subcellularLocation>
</comment>
<comment type="similarity">
    <text evidence="3">Belongs to the arthropod CHH/MIH/GIH/VIH hormone family.</text>
</comment>
<feature type="signal peptide" evidence="2">
    <location>
        <begin position="1"/>
        <end position="35"/>
    </location>
</feature>
<feature type="peptide" id="PRO_0000019076" description="Molt-inhibiting hormone">
    <location>
        <begin position="36"/>
        <end position="113"/>
    </location>
</feature>
<feature type="disulfide bond" evidence="1">
    <location>
        <begin position="42"/>
        <end position="79"/>
    </location>
</feature>
<feature type="disulfide bond" evidence="1">
    <location>
        <begin position="59"/>
        <end position="75"/>
    </location>
</feature>
<feature type="disulfide bond" evidence="1">
    <location>
        <begin position="62"/>
        <end position="88"/>
    </location>
</feature>
<reference key="1">
    <citation type="journal article" date="1995" name="Biochem. Biophys. Res. Commun.">
        <title>Molecular cloning of a cDNA encoding putative molt-inhibiting hormone from the blue crab, Callinectes sapidus.</title>
        <authorList>
            <person name="Lee K.J."/>
            <person name="Elton T.S."/>
            <person name="Bej A.K."/>
            <person name="Watts S.A."/>
            <person name="Watson R.D."/>
        </authorList>
    </citation>
    <scope>NUCLEOTIDE SEQUENCE [MRNA]</scope>
    <source>
        <tissue>Eyestalk</tissue>
    </source>
</reference>